<reference key="1">
    <citation type="journal article" date="2006" name="J. Bacteriol.">
        <title>Whole-genome sequence of Listeria welshimeri reveals common steps in genome reduction with Listeria innocua as compared to Listeria monocytogenes.</title>
        <authorList>
            <person name="Hain T."/>
            <person name="Steinweg C."/>
            <person name="Kuenne C.T."/>
            <person name="Billion A."/>
            <person name="Ghai R."/>
            <person name="Chatterjee S.S."/>
            <person name="Domann E."/>
            <person name="Kaerst U."/>
            <person name="Goesmann A."/>
            <person name="Bekel T."/>
            <person name="Bartels D."/>
            <person name="Kaiser O."/>
            <person name="Meyer F."/>
            <person name="Puehler A."/>
            <person name="Weisshaar B."/>
            <person name="Wehland J."/>
            <person name="Liang C."/>
            <person name="Dandekar T."/>
            <person name="Lampidis R."/>
            <person name="Kreft J."/>
            <person name="Goebel W."/>
            <person name="Chakraborty T."/>
        </authorList>
    </citation>
    <scope>NUCLEOTIDE SEQUENCE [LARGE SCALE GENOMIC DNA]</scope>
    <source>
        <strain>ATCC 35897 / DSM 20650 / CCUG 15529 / CIP 8149 / NCTC 11857 / SLCC 5334 / V8</strain>
    </source>
</reference>
<sequence>MKISKRQQDIYEFIKSEVKEKGYPPSVREIGEAVGLASSSTVHGHLARLEGKGLIRRDPTKPRAIEILSLEDEAETPNVVNIPIIGKVTAGMPITAIENIEEYFPLPEYMAAGETNVFMLEIDGESMINAGILDGDKVIVRQQNSAINGEIVVAMTDENEATCKRFYKEANHFRLQPENDALEPIILNNVTILGKVIGLYRDIR</sequence>
<evidence type="ECO:0000255" key="1">
    <source>
        <dbReference type="HAMAP-Rule" id="MF_00015"/>
    </source>
</evidence>
<accession>A0AIA3</accession>
<gene>
    <name evidence="1" type="primary">lexA</name>
    <name type="ordered locus">lwe1317</name>
</gene>
<name>LEXA_LISW6</name>
<dbReference type="EC" id="3.4.21.88" evidence="1"/>
<dbReference type="EMBL" id="AM263198">
    <property type="protein sequence ID" value="CAK20735.1"/>
    <property type="molecule type" value="Genomic_DNA"/>
</dbReference>
<dbReference type="RefSeq" id="WP_011702122.1">
    <property type="nucleotide sequence ID" value="NC_008555.1"/>
</dbReference>
<dbReference type="SMR" id="A0AIA3"/>
<dbReference type="STRING" id="386043.lwe1317"/>
<dbReference type="MEROPS" id="S24.001"/>
<dbReference type="GeneID" id="61189194"/>
<dbReference type="KEGG" id="lwe:lwe1317"/>
<dbReference type="eggNOG" id="COG1974">
    <property type="taxonomic scope" value="Bacteria"/>
</dbReference>
<dbReference type="HOGENOM" id="CLU_066192_45_1_9"/>
<dbReference type="OrthoDB" id="9802364at2"/>
<dbReference type="Proteomes" id="UP000000779">
    <property type="component" value="Chromosome"/>
</dbReference>
<dbReference type="GO" id="GO:0003677">
    <property type="term" value="F:DNA binding"/>
    <property type="evidence" value="ECO:0007669"/>
    <property type="project" value="UniProtKB-UniRule"/>
</dbReference>
<dbReference type="GO" id="GO:0004252">
    <property type="term" value="F:serine-type endopeptidase activity"/>
    <property type="evidence" value="ECO:0007669"/>
    <property type="project" value="UniProtKB-UniRule"/>
</dbReference>
<dbReference type="GO" id="GO:0006281">
    <property type="term" value="P:DNA repair"/>
    <property type="evidence" value="ECO:0007669"/>
    <property type="project" value="UniProtKB-UniRule"/>
</dbReference>
<dbReference type="GO" id="GO:0006260">
    <property type="term" value="P:DNA replication"/>
    <property type="evidence" value="ECO:0007669"/>
    <property type="project" value="UniProtKB-UniRule"/>
</dbReference>
<dbReference type="GO" id="GO:0045892">
    <property type="term" value="P:negative regulation of DNA-templated transcription"/>
    <property type="evidence" value="ECO:0007669"/>
    <property type="project" value="UniProtKB-UniRule"/>
</dbReference>
<dbReference type="GO" id="GO:0006508">
    <property type="term" value="P:proteolysis"/>
    <property type="evidence" value="ECO:0007669"/>
    <property type="project" value="InterPro"/>
</dbReference>
<dbReference type="GO" id="GO:0009432">
    <property type="term" value="P:SOS response"/>
    <property type="evidence" value="ECO:0007669"/>
    <property type="project" value="UniProtKB-UniRule"/>
</dbReference>
<dbReference type="CDD" id="cd00090">
    <property type="entry name" value="HTH_ARSR"/>
    <property type="match status" value="1"/>
</dbReference>
<dbReference type="CDD" id="cd06529">
    <property type="entry name" value="S24_LexA-like"/>
    <property type="match status" value="1"/>
</dbReference>
<dbReference type="FunFam" id="1.10.10.10:FF:000009">
    <property type="entry name" value="LexA repressor"/>
    <property type="match status" value="1"/>
</dbReference>
<dbReference type="FunFam" id="2.10.109.10:FF:000001">
    <property type="entry name" value="LexA repressor"/>
    <property type="match status" value="1"/>
</dbReference>
<dbReference type="Gene3D" id="2.10.109.10">
    <property type="entry name" value="Umud Fragment, subunit A"/>
    <property type="match status" value="1"/>
</dbReference>
<dbReference type="Gene3D" id="1.10.10.10">
    <property type="entry name" value="Winged helix-like DNA-binding domain superfamily/Winged helix DNA-binding domain"/>
    <property type="match status" value="1"/>
</dbReference>
<dbReference type="HAMAP" id="MF_00015">
    <property type="entry name" value="LexA"/>
    <property type="match status" value="1"/>
</dbReference>
<dbReference type="InterPro" id="IPR011991">
    <property type="entry name" value="ArsR-like_HTH"/>
</dbReference>
<dbReference type="InterPro" id="IPR006200">
    <property type="entry name" value="LexA"/>
</dbReference>
<dbReference type="InterPro" id="IPR039418">
    <property type="entry name" value="LexA-like"/>
</dbReference>
<dbReference type="InterPro" id="IPR036286">
    <property type="entry name" value="LexA/Signal_pep-like_sf"/>
</dbReference>
<dbReference type="InterPro" id="IPR006199">
    <property type="entry name" value="LexA_DNA-bd_dom"/>
</dbReference>
<dbReference type="InterPro" id="IPR050077">
    <property type="entry name" value="LexA_repressor"/>
</dbReference>
<dbReference type="InterPro" id="IPR006197">
    <property type="entry name" value="Peptidase_S24_LexA"/>
</dbReference>
<dbReference type="InterPro" id="IPR015927">
    <property type="entry name" value="Peptidase_S24_S26A/B/C"/>
</dbReference>
<dbReference type="InterPro" id="IPR036388">
    <property type="entry name" value="WH-like_DNA-bd_sf"/>
</dbReference>
<dbReference type="InterPro" id="IPR036390">
    <property type="entry name" value="WH_DNA-bd_sf"/>
</dbReference>
<dbReference type="NCBIfam" id="TIGR00498">
    <property type="entry name" value="lexA"/>
    <property type="match status" value="1"/>
</dbReference>
<dbReference type="PANTHER" id="PTHR33516">
    <property type="entry name" value="LEXA REPRESSOR"/>
    <property type="match status" value="1"/>
</dbReference>
<dbReference type="PANTHER" id="PTHR33516:SF2">
    <property type="entry name" value="LEXA REPRESSOR-RELATED"/>
    <property type="match status" value="1"/>
</dbReference>
<dbReference type="Pfam" id="PF01726">
    <property type="entry name" value="LexA_DNA_bind"/>
    <property type="match status" value="1"/>
</dbReference>
<dbReference type="Pfam" id="PF00717">
    <property type="entry name" value="Peptidase_S24"/>
    <property type="match status" value="1"/>
</dbReference>
<dbReference type="PRINTS" id="PR00726">
    <property type="entry name" value="LEXASERPTASE"/>
</dbReference>
<dbReference type="SUPFAM" id="SSF51306">
    <property type="entry name" value="LexA/Signal peptidase"/>
    <property type="match status" value="1"/>
</dbReference>
<dbReference type="SUPFAM" id="SSF46785">
    <property type="entry name" value="Winged helix' DNA-binding domain"/>
    <property type="match status" value="1"/>
</dbReference>
<keyword id="KW-0068">Autocatalytic cleavage</keyword>
<keyword id="KW-0227">DNA damage</keyword>
<keyword id="KW-0234">DNA repair</keyword>
<keyword id="KW-0235">DNA replication</keyword>
<keyword id="KW-0238">DNA-binding</keyword>
<keyword id="KW-0378">Hydrolase</keyword>
<keyword id="KW-0678">Repressor</keyword>
<keyword id="KW-0742">SOS response</keyword>
<keyword id="KW-0804">Transcription</keyword>
<keyword id="KW-0805">Transcription regulation</keyword>
<feature type="chain" id="PRO_1000001300" description="LexA repressor">
    <location>
        <begin position="1"/>
        <end position="204"/>
    </location>
</feature>
<feature type="DNA-binding region" description="H-T-H motif" evidence="1">
    <location>
        <begin position="27"/>
        <end position="47"/>
    </location>
</feature>
<feature type="active site" description="For autocatalytic cleavage activity" evidence="1">
    <location>
        <position position="126"/>
    </location>
</feature>
<feature type="active site" description="For autocatalytic cleavage activity" evidence="1">
    <location>
        <position position="164"/>
    </location>
</feature>
<feature type="site" description="Cleavage; by autolysis" evidence="1">
    <location>
        <begin position="90"/>
        <end position="91"/>
    </location>
</feature>
<proteinExistence type="inferred from homology"/>
<organism>
    <name type="scientific">Listeria welshimeri serovar 6b (strain ATCC 35897 / DSM 20650 / CCUG 15529 / CIP 8149 / NCTC 11857 / SLCC 5334 / V8)</name>
    <dbReference type="NCBI Taxonomy" id="386043"/>
    <lineage>
        <taxon>Bacteria</taxon>
        <taxon>Bacillati</taxon>
        <taxon>Bacillota</taxon>
        <taxon>Bacilli</taxon>
        <taxon>Bacillales</taxon>
        <taxon>Listeriaceae</taxon>
        <taxon>Listeria</taxon>
    </lineage>
</organism>
<comment type="function">
    <text evidence="1">Represses a number of genes involved in the response to DNA damage (SOS response), including recA and lexA. In the presence of single-stranded DNA, RecA interacts with LexA causing an autocatalytic cleavage which disrupts the DNA-binding part of LexA, leading to derepression of the SOS regulon and eventually DNA repair.</text>
</comment>
<comment type="catalytic activity">
    <reaction evidence="1">
        <text>Hydrolysis of Ala-|-Gly bond in repressor LexA.</text>
        <dbReference type="EC" id="3.4.21.88"/>
    </reaction>
</comment>
<comment type="subunit">
    <text evidence="1">Homodimer.</text>
</comment>
<comment type="similarity">
    <text evidence="1">Belongs to the peptidase S24 family.</text>
</comment>
<protein>
    <recommendedName>
        <fullName evidence="1">LexA repressor</fullName>
        <ecNumber evidence="1">3.4.21.88</ecNumber>
    </recommendedName>
</protein>